<feature type="chain" id="PRO_0000127337" description="Protein L-Myc-1-A">
    <location>
        <begin position="1"/>
        <end position="344"/>
    </location>
</feature>
<feature type="domain" description="bHLH" evidence="1">
    <location>
        <begin position="261"/>
        <end position="313"/>
    </location>
</feature>
<feature type="region of interest" description="Disordered" evidence="2">
    <location>
        <begin position="100"/>
        <end position="162"/>
    </location>
</feature>
<feature type="region of interest" description="Disordered" evidence="2">
    <location>
        <begin position="209"/>
        <end position="261"/>
    </location>
</feature>
<feature type="region of interest" description="Leucine-zipper">
    <location>
        <begin position="313"/>
        <end position="341"/>
    </location>
</feature>
<feature type="compositionally biased region" description="Polar residues" evidence="2">
    <location>
        <begin position="102"/>
        <end position="112"/>
    </location>
</feature>
<feature type="compositionally biased region" description="Polar residues" evidence="2">
    <location>
        <begin position="123"/>
        <end position="133"/>
    </location>
</feature>
<feature type="compositionally biased region" description="Polar residues" evidence="2">
    <location>
        <begin position="236"/>
        <end position="255"/>
    </location>
</feature>
<feature type="sequence conflict" description="In Ref. 1; AAA49994." evidence="4" ref="1">
    <original>N</original>
    <variation>T</variation>
    <location>
        <position position="133"/>
    </location>
</feature>
<feature type="sequence conflict" description="In Ref. 1; AAA49994." evidence="4" ref="1">
    <original>K</original>
    <variation>R</variation>
    <location>
        <position position="324"/>
    </location>
</feature>
<sequence>MDVGSCNNHYFYDVDMKEDFYRCIAPSEDIWKKFELVPGFPLSPGGCPGGGGTDWGAELMDLGWESPMKLTGLSSVVLLRDCMWSGFSTRERLEKVIHERLTTASPRATNPQKPVADHENSEPGVNSIEQNANPLVVPTPVPEKVPNSSGSESTSDSEDDEIDVVTIEKRKSYGGRQPVTITVRADPTATKLFHISIHQQQHNYAARLPPEPNSMSPQPNFHSPIKEEPGEVTSPPALQQCSSPMPGSPLASGSSDSEDIVKKKNHNYLERKRRNDLRSRFLALREEVPSLTRSTKTPKVVVLSKATEFLKGLVIQEQQLTAEKFKLWSRHQQLLRRISHLKGR</sequence>
<comment type="subunit">
    <text>Efficient DNA binding requires dimerization with another bHLH protein. Binds DNA as a heterodimer with MAX.</text>
</comment>
<comment type="subcellular location">
    <subcellularLocation>
        <location evidence="1">Nucleus</location>
    </subcellularLocation>
</comment>
<comment type="tissue specificity">
    <text evidence="3">High levels in oocytes, modest levels in kidney and low levels in spleen.</text>
</comment>
<dbReference type="EMBL" id="L11362">
    <property type="protein sequence ID" value="AAA49994.1"/>
    <property type="molecule type" value="mRNA"/>
</dbReference>
<dbReference type="EMBL" id="BC084925">
    <property type="protein sequence ID" value="AAH84925.1"/>
    <property type="molecule type" value="mRNA"/>
</dbReference>
<dbReference type="PIR" id="A48101">
    <property type="entry name" value="A48101"/>
</dbReference>
<dbReference type="RefSeq" id="NP_001081340.1">
    <property type="nucleotide sequence ID" value="NM_001087871.1"/>
</dbReference>
<dbReference type="SMR" id="Q05404"/>
<dbReference type="DNASU" id="397783"/>
<dbReference type="GeneID" id="397783"/>
<dbReference type="KEGG" id="xla:397783"/>
<dbReference type="AGR" id="Xenbase:XB-GENE-6252588"/>
<dbReference type="CTD" id="397783"/>
<dbReference type="Xenbase" id="XB-GENE-6252588">
    <property type="gene designation" value="mycl.L"/>
</dbReference>
<dbReference type="OrthoDB" id="5964374at2759"/>
<dbReference type="Proteomes" id="UP000186698">
    <property type="component" value="Chromosome 2L"/>
</dbReference>
<dbReference type="Bgee" id="397783">
    <property type="expression patterns" value="Expressed in blastula and 17 other cell types or tissues"/>
</dbReference>
<dbReference type="GO" id="GO:0005634">
    <property type="term" value="C:nucleus"/>
    <property type="evidence" value="ECO:0007669"/>
    <property type="project" value="UniProtKB-SubCell"/>
</dbReference>
<dbReference type="GO" id="GO:0000981">
    <property type="term" value="F:DNA-binding transcription factor activity, RNA polymerase II-specific"/>
    <property type="evidence" value="ECO:0000318"/>
    <property type="project" value="GO_Central"/>
</dbReference>
<dbReference type="GO" id="GO:0046983">
    <property type="term" value="F:protein dimerization activity"/>
    <property type="evidence" value="ECO:0007669"/>
    <property type="project" value="InterPro"/>
</dbReference>
<dbReference type="GO" id="GO:0000978">
    <property type="term" value="F:RNA polymerase II cis-regulatory region sequence-specific DNA binding"/>
    <property type="evidence" value="ECO:0000318"/>
    <property type="project" value="GO_Central"/>
</dbReference>
<dbReference type="GO" id="GO:0006357">
    <property type="term" value="P:regulation of transcription by RNA polymerase II"/>
    <property type="evidence" value="ECO:0000318"/>
    <property type="project" value="GO_Central"/>
</dbReference>
<dbReference type="CDD" id="cd11457">
    <property type="entry name" value="bHLHzip_L-Myc"/>
    <property type="match status" value="1"/>
</dbReference>
<dbReference type="FunFam" id="4.10.280.10:FF:000019">
    <property type="entry name" value="Myc proto-oncogene protein"/>
    <property type="match status" value="1"/>
</dbReference>
<dbReference type="Gene3D" id="4.10.280.10">
    <property type="entry name" value="Helix-loop-helix DNA-binding domain"/>
    <property type="match status" value="1"/>
</dbReference>
<dbReference type="InterPro" id="IPR011598">
    <property type="entry name" value="bHLH_dom"/>
</dbReference>
<dbReference type="InterPro" id="IPR036638">
    <property type="entry name" value="HLH_DNA-bd_sf"/>
</dbReference>
<dbReference type="InterPro" id="IPR050433">
    <property type="entry name" value="Myc_transcription_factors"/>
</dbReference>
<dbReference type="InterPro" id="IPR002418">
    <property type="entry name" value="Tscrpt_reg_Myc"/>
</dbReference>
<dbReference type="InterPro" id="IPR012682">
    <property type="entry name" value="Tscrpt_reg_Myc_N"/>
</dbReference>
<dbReference type="PANTHER" id="PTHR45851">
    <property type="entry name" value="MYC PROTO-ONCOGENE"/>
    <property type="match status" value="1"/>
</dbReference>
<dbReference type="Pfam" id="PF00010">
    <property type="entry name" value="HLH"/>
    <property type="match status" value="1"/>
</dbReference>
<dbReference type="Pfam" id="PF01056">
    <property type="entry name" value="Myc_N"/>
    <property type="match status" value="2"/>
</dbReference>
<dbReference type="PIRSF" id="PIRSF001705">
    <property type="entry name" value="Myc_protein"/>
    <property type="match status" value="1"/>
</dbReference>
<dbReference type="PRINTS" id="PR00044">
    <property type="entry name" value="LEUZIPPRMYC"/>
</dbReference>
<dbReference type="SMART" id="SM00353">
    <property type="entry name" value="HLH"/>
    <property type="match status" value="1"/>
</dbReference>
<dbReference type="SUPFAM" id="SSF47459">
    <property type="entry name" value="HLH, helix-loop-helix DNA-binding domain"/>
    <property type="match status" value="1"/>
</dbReference>
<dbReference type="PROSITE" id="PS50888">
    <property type="entry name" value="BHLH"/>
    <property type="match status" value="1"/>
</dbReference>
<name>MCL1A_XENLA</name>
<reference key="1">
    <citation type="journal article" date="1993" name="Mol. Cell. Biol.">
        <title>Comparative analysis of the expression and oncogenic activities of Xenopus c-, N-, and L-myc homologs.</title>
        <authorList>
            <person name="Schreiber-Agus N."/>
            <person name="Torres R."/>
            <person name="Horner J."/>
            <person name="Lau A."/>
            <person name="Jamrich M."/>
            <person name="DePinho R.A."/>
        </authorList>
    </citation>
    <scope>NUCLEOTIDE SEQUENCE [MRNA]</scope>
    <scope>TISSUE SPECIFICITY</scope>
    <source>
        <tissue>Blastula</tissue>
    </source>
</reference>
<reference key="2">
    <citation type="submission" date="2004-10" db="EMBL/GenBank/DDBJ databases">
        <authorList>
            <consortium name="NIH - Xenopus Gene Collection (XGC) project"/>
        </authorList>
    </citation>
    <scope>NUCLEOTIDE SEQUENCE [LARGE SCALE MRNA]</scope>
    <source>
        <tissue>Gastrula</tissue>
    </source>
</reference>
<protein>
    <recommendedName>
        <fullName>Protein L-Myc-1-A</fullName>
    </recommendedName>
    <alternativeName>
        <fullName>Protein L-Myc 1</fullName>
        <shortName>xL-Myc1</shortName>
    </alternativeName>
</protein>
<gene>
    <name type="primary">mycl1-a</name>
    <name type="synonym">lmyc-a</name>
    <name type="synonym">lmyc1</name>
    <name type="synonym">mycl1</name>
</gene>
<proteinExistence type="evidence at transcript level"/>
<organism>
    <name type="scientific">Xenopus laevis</name>
    <name type="common">African clawed frog</name>
    <dbReference type="NCBI Taxonomy" id="8355"/>
    <lineage>
        <taxon>Eukaryota</taxon>
        <taxon>Metazoa</taxon>
        <taxon>Chordata</taxon>
        <taxon>Craniata</taxon>
        <taxon>Vertebrata</taxon>
        <taxon>Euteleostomi</taxon>
        <taxon>Amphibia</taxon>
        <taxon>Batrachia</taxon>
        <taxon>Anura</taxon>
        <taxon>Pipoidea</taxon>
        <taxon>Pipidae</taxon>
        <taxon>Xenopodinae</taxon>
        <taxon>Xenopus</taxon>
        <taxon>Xenopus</taxon>
    </lineage>
</organism>
<accession>Q05404</accession>
<accession>Q5U4W8</accession>
<evidence type="ECO:0000255" key="1">
    <source>
        <dbReference type="PROSITE-ProRule" id="PRU00981"/>
    </source>
</evidence>
<evidence type="ECO:0000256" key="2">
    <source>
        <dbReference type="SAM" id="MobiDB-lite"/>
    </source>
</evidence>
<evidence type="ECO:0000269" key="3">
    <source>
    </source>
</evidence>
<evidence type="ECO:0000305" key="4"/>
<keyword id="KW-0238">DNA-binding</keyword>
<keyword id="KW-0539">Nucleus</keyword>
<keyword id="KW-0597">Phosphoprotein</keyword>
<keyword id="KW-1185">Reference proteome</keyword>